<name>HEM3_LEGPA</name>
<gene>
    <name evidence="1" type="primary">hemC</name>
    <name type="ordered locus">lpp2791</name>
</gene>
<reference key="1">
    <citation type="journal article" date="2004" name="Nat. Genet.">
        <title>Evidence in the Legionella pneumophila genome for exploitation of host cell functions and high genome plasticity.</title>
        <authorList>
            <person name="Cazalet C."/>
            <person name="Rusniok C."/>
            <person name="Brueggemann H."/>
            <person name="Zidane N."/>
            <person name="Magnier A."/>
            <person name="Ma L."/>
            <person name="Tichit M."/>
            <person name="Jarraud S."/>
            <person name="Bouchier C."/>
            <person name="Vandenesch F."/>
            <person name="Kunst F."/>
            <person name="Etienne J."/>
            <person name="Glaser P."/>
            <person name="Buchrieser C."/>
        </authorList>
    </citation>
    <scope>NUCLEOTIDE SEQUENCE [LARGE SCALE GENOMIC DNA]</scope>
    <source>
        <strain>Paris</strain>
    </source>
</reference>
<sequence length="309" mass="34013">MSAKIIRIATRQSPLALWQANHVREMLVKQWPNLSIELLPMITSGDRFLKDKLLSAGGKGLFVKELEEALLDKRADLAVHSTKDMPAQLPDGLSLAAICKRDNPFDALISPRFKSLDALPKNAIIGTSSLRRQSQLLAYNPNLQIKTLRGNIHTRLSKLESGEYQAIILAAAGLERMGLAHHITQLIPDDIMLPTCAQGALCIECRTDDLEIQELIHGLNDPISALCVHTERRVNAKLGGNCHIPFAVYCTITAEKLLLLRAKVLNLDGSQMIDDEQQGKIEEAEIIADRCTESLMTKGAMSLLSTIPS</sequence>
<evidence type="ECO:0000255" key="1">
    <source>
        <dbReference type="HAMAP-Rule" id="MF_00260"/>
    </source>
</evidence>
<accession>Q5X1F2</accession>
<dbReference type="EC" id="2.5.1.61" evidence="1"/>
<dbReference type="EMBL" id="CR628336">
    <property type="protein sequence ID" value="CAH13944.1"/>
    <property type="molecule type" value="Genomic_DNA"/>
</dbReference>
<dbReference type="RefSeq" id="WP_015961782.1">
    <property type="nucleotide sequence ID" value="NC_006368.1"/>
</dbReference>
<dbReference type="SMR" id="Q5X1F2"/>
<dbReference type="KEGG" id="lpp:lpp2791"/>
<dbReference type="LegioList" id="lpp2791"/>
<dbReference type="HOGENOM" id="CLU_019704_0_2_6"/>
<dbReference type="UniPathway" id="UPA00251">
    <property type="reaction ID" value="UER00319"/>
</dbReference>
<dbReference type="GO" id="GO:0005737">
    <property type="term" value="C:cytoplasm"/>
    <property type="evidence" value="ECO:0007669"/>
    <property type="project" value="TreeGrafter"/>
</dbReference>
<dbReference type="GO" id="GO:0004418">
    <property type="term" value="F:hydroxymethylbilane synthase activity"/>
    <property type="evidence" value="ECO:0007669"/>
    <property type="project" value="UniProtKB-UniRule"/>
</dbReference>
<dbReference type="GO" id="GO:0006782">
    <property type="term" value="P:protoporphyrinogen IX biosynthetic process"/>
    <property type="evidence" value="ECO:0007669"/>
    <property type="project" value="UniProtKB-UniRule"/>
</dbReference>
<dbReference type="CDD" id="cd13646">
    <property type="entry name" value="PBP2_EcHMBS_like"/>
    <property type="match status" value="1"/>
</dbReference>
<dbReference type="FunFam" id="3.40.190.10:FF:000004">
    <property type="entry name" value="Porphobilinogen deaminase"/>
    <property type="match status" value="1"/>
</dbReference>
<dbReference type="FunFam" id="3.40.190.10:FF:000005">
    <property type="entry name" value="Porphobilinogen deaminase"/>
    <property type="match status" value="1"/>
</dbReference>
<dbReference type="Gene3D" id="3.40.190.10">
    <property type="entry name" value="Periplasmic binding protein-like II"/>
    <property type="match status" value="2"/>
</dbReference>
<dbReference type="Gene3D" id="3.30.160.40">
    <property type="entry name" value="Porphobilinogen deaminase, C-terminal domain"/>
    <property type="match status" value="1"/>
</dbReference>
<dbReference type="HAMAP" id="MF_00260">
    <property type="entry name" value="Porphobil_deam"/>
    <property type="match status" value="1"/>
</dbReference>
<dbReference type="InterPro" id="IPR000860">
    <property type="entry name" value="HemC"/>
</dbReference>
<dbReference type="InterPro" id="IPR022419">
    <property type="entry name" value="Porphobilin_deaminase_cofac_BS"/>
</dbReference>
<dbReference type="InterPro" id="IPR022417">
    <property type="entry name" value="Porphobilin_deaminase_N"/>
</dbReference>
<dbReference type="InterPro" id="IPR022418">
    <property type="entry name" value="Porphobilinogen_deaminase_C"/>
</dbReference>
<dbReference type="InterPro" id="IPR036803">
    <property type="entry name" value="Porphobilinogen_deaminase_C_sf"/>
</dbReference>
<dbReference type="NCBIfam" id="TIGR00212">
    <property type="entry name" value="hemC"/>
    <property type="match status" value="1"/>
</dbReference>
<dbReference type="PANTHER" id="PTHR11557">
    <property type="entry name" value="PORPHOBILINOGEN DEAMINASE"/>
    <property type="match status" value="1"/>
</dbReference>
<dbReference type="PANTHER" id="PTHR11557:SF0">
    <property type="entry name" value="PORPHOBILINOGEN DEAMINASE"/>
    <property type="match status" value="1"/>
</dbReference>
<dbReference type="Pfam" id="PF01379">
    <property type="entry name" value="Porphobil_deam"/>
    <property type="match status" value="1"/>
</dbReference>
<dbReference type="Pfam" id="PF03900">
    <property type="entry name" value="Porphobil_deamC"/>
    <property type="match status" value="1"/>
</dbReference>
<dbReference type="PIRSF" id="PIRSF001438">
    <property type="entry name" value="4pyrrol_synth_OHMeBilane_synth"/>
    <property type="match status" value="1"/>
</dbReference>
<dbReference type="PRINTS" id="PR00151">
    <property type="entry name" value="PORPHBDMNASE"/>
</dbReference>
<dbReference type="SUPFAM" id="SSF53850">
    <property type="entry name" value="Periplasmic binding protein-like II"/>
    <property type="match status" value="1"/>
</dbReference>
<dbReference type="SUPFAM" id="SSF54782">
    <property type="entry name" value="Porphobilinogen deaminase (hydroxymethylbilane synthase), C-terminal domain"/>
    <property type="match status" value="1"/>
</dbReference>
<dbReference type="PROSITE" id="PS00533">
    <property type="entry name" value="PORPHOBILINOGEN_DEAM"/>
    <property type="match status" value="1"/>
</dbReference>
<protein>
    <recommendedName>
        <fullName evidence="1">Porphobilinogen deaminase</fullName>
        <shortName evidence="1">PBG</shortName>
        <ecNumber evidence="1">2.5.1.61</ecNumber>
    </recommendedName>
    <alternativeName>
        <fullName evidence="1">Hydroxymethylbilane synthase</fullName>
        <shortName evidence="1">HMBS</shortName>
    </alternativeName>
    <alternativeName>
        <fullName evidence="1">Pre-uroporphyrinogen synthase</fullName>
    </alternativeName>
</protein>
<keyword id="KW-0627">Porphyrin biosynthesis</keyword>
<keyword id="KW-0808">Transferase</keyword>
<comment type="function">
    <text evidence="1">Tetrapolymerization of the monopyrrole PBG into the hydroxymethylbilane pre-uroporphyrinogen in several discrete steps.</text>
</comment>
<comment type="catalytic activity">
    <reaction evidence="1">
        <text>4 porphobilinogen + H2O = hydroxymethylbilane + 4 NH4(+)</text>
        <dbReference type="Rhea" id="RHEA:13185"/>
        <dbReference type="ChEBI" id="CHEBI:15377"/>
        <dbReference type="ChEBI" id="CHEBI:28938"/>
        <dbReference type="ChEBI" id="CHEBI:57845"/>
        <dbReference type="ChEBI" id="CHEBI:58126"/>
        <dbReference type="EC" id="2.5.1.61"/>
    </reaction>
</comment>
<comment type="cofactor">
    <cofactor evidence="1">
        <name>dipyrromethane</name>
        <dbReference type="ChEBI" id="CHEBI:60342"/>
    </cofactor>
    <text evidence="1">Binds 1 dipyrromethane group covalently.</text>
</comment>
<comment type="pathway">
    <text evidence="1">Porphyrin-containing compound metabolism; protoporphyrin-IX biosynthesis; coproporphyrinogen-III from 5-aminolevulinate: step 2/4.</text>
</comment>
<comment type="subunit">
    <text evidence="1">Monomer.</text>
</comment>
<comment type="miscellaneous">
    <text evidence="1">The porphobilinogen subunits are added to the dipyrromethane group.</text>
</comment>
<comment type="similarity">
    <text evidence="1">Belongs to the HMBS family.</text>
</comment>
<feature type="chain" id="PRO_0000142948" description="Porphobilinogen deaminase">
    <location>
        <begin position="1"/>
        <end position="309"/>
    </location>
</feature>
<feature type="modified residue" description="S-(dipyrrolylmethanemethyl)cysteine" evidence="1">
    <location>
        <position position="242"/>
    </location>
</feature>
<proteinExistence type="inferred from homology"/>
<organism>
    <name type="scientific">Legionella pneumophila (strain Paris)</name>
    <dbReference type="NCBI Taxonomy" id="297246"/>
    <lineage>
        <taxon>Bacteria</taxon>
        <taxon>Pseudomonadati</taxon>
        <taxon>Pseudomonadota</taxon>
        <taxon>Gammaproteobacteria</taxon>
        <taxon>Legionellales</taxon>
        <taxon>Legionellaceae</taxon>
        <taxon>Legionella</taxon>
    </lineage>
</organism>